<name>MRAY_BURO1</name>
<organism>
    <name type="scientific">Burkholderia orbicola (strain AU 1054)</name>
    <dbReference type="NCBI Taxonomy" id="331271"/>
    <lineage>
        <taxon>Bacteria</taxon>
        <taxon>Pseudomonadati</taxon>
        <taxon>Pseudomonadota</taxon>
        <taxon>Betaproteobacteria</taxon>
        <taxon>Burkholderiales</taxon>
        <taxon>Burkholderiaceae</taxon>
        <taxon>Burkholderia</taxon>
        <taxon>Burkholderia cepacia complex</taxon>
        <taxon>Burkholderia orbicola</taxon>
    </lineage>
</organism>
<proteinExistence type="inferred from homology"/>
<dbReference type="EC" id="2.7.8.13" evidence="1"/>
<dbReference type="EMBL" id="CP000378">
    <property type="protein sequence ID" value="ABF74989.1"/>
    <property type="molecule type" value="Genomic_DNA"/>
</dbReference>
<dbReference type="SMR" id="Q1BZG6"/>
<dbReference type="HOGENOM" id="CLU_023982_0_0_4"/>
<dbReference type="UniPathway" id="UPA00219"/>
<dbReference type="GO" id="GO:0005886">
    <property type="term" value="C:plasma membrane"/>
    <property type="evidence" value="ECO:0007669"/>
    <property type="project" value="UniProtKB-SubCell"/>
</dbReference>
<dbReference type="GO" id="GO:0046872">
    <property type="term" value="F:metal ion binding"/>
    <property type="evidence" value="ECO:0007669"/>
    <property type="project" value="UniProtKB-KW"/>
</dbReference>
<dbReference type="GO" id="GO:0008963">
    <property type="term" value="F:phospho-N-acetylmuramoyl-pentapeptide-transferase activity"/>
    <property type="evidence" value="ECO:0007669"/>
    <property type="project" value="UniProtKB-UniRule"/>
</dbReference>
<dbReference type="GO" id="GO:0051992">
    <property type="term" value="F:UDP-N-acetylmuramoyl-L-alanyl-D-glutamyl-meso-2,6-diaminopimelyl-D-alanyl-D-alanine:undecaprenyl-phosphate transferase activity"/>
    <property type="evidence" value="ECO:0007669"/>
    <property type="project" value="RHEA"/>
</dbReference>
<dbReference type="GO" id="GO:0051301">
    <property type="term" value="P:cell division"/>
    <property type="evidence" value="ECO:0007669"/>
    <property type="project" value="UniProtKB-KW"/>
</dbReference>
<dbReference type="GO" id="GO:0071555">
    <property type="term" value="P:cell wall organization"/>
    <property type="evidence" value="ECO:0007669"/>
    <property type="project" value="UniProtKB-KW"/>
</dbReference>
<dbReference type="GO" id="GO:0009252">
    <property type="term" value="P:peptidoglycan biosynthetic process"/>
    <property type="evidence" value="ECO:0007669"/>
    <property type="project" value="UniProtKB-UniRule"/>
</dbReference>
<dbReference type="GO" id="GO:0008360">
    <property type="term" value="P:regulation of cell shape"/>
    <property type="evidence" value="ECO:0007669"/>
    <property type="project" value="UniProtKB-KW"/>
</dbReference>
<dbReference type="CDD" id="cd06852">
    <property type="entry name" value="GT_MraY"/>
    <property type="match status" value="1"/>
</dbReference>
<dbReference type="HAMAP" id="MF_00038">
    <property type="entry name" value="MraY"/>
    <property type="match status" value="1"/>
</dbReference>
<dbReference type="InterPro" id="IPR000715">
    <property type="entry name" value="Glycosyl_transferase_4"/>
</dbReference>
<dbReference type="InterPro" id="IPR003524">
    <property type="entry name" value="PNAcMuramoyl-5peptid_Trfase"/>
</dbReference>
<dbReference type="InterPro" id="IPR018480">
    <property type="entry name" value="PNAcMuramoyl-5peptid_Trfase_CS"/>
</dbReference>
<dbReference type="NCBIfam" id="TIGR00445">
    <property type="entry name" value="mraY"/>
    <property type="match status" value="1"/>
</dbReference>
<dbReference type="PANTHER" id="PTHR22926">
    <property type="entry name" value="PHOSPHO-N-ACETYLMURAMOYL-PENTAPEPTIDE-TRANSFERASE"/>
    <property type="match status" value="1"/>
</dbReference>
<dbReference type="PANTHER" id="PTHR22926:SF5">
    <property type="entry name" value="PHOSPHO-N-ACETYLMURAMOYL-PENTAPEPTIDE-TRANSFERASE HOMOLOG"/>
    <property type="match status" value="1"/>
</dbReference>
<dbReference type="Pfam" id="PF00953">
    <property type="entry name" value="Glycos_transf_4"/>
    <property type="match status" value="1"/>
</dbReference>
<dbReference type="Pfam" id="PF10555">
    <property type="entry name" value="MraY_sig1"/>
    <property type="match status" value="1"/>
</dbReference>
<dbReference type="PROSITE" id="PS01347">
    <property type="entry name" value="MRAY_1"/>
    <property type="match status" value="1"/>
</dbReference>
<dbReference type="PROSITE" id="PS01348">
    <property type="entry name" value="MRAY_2"/>
    <property type="match status" value="1"/>
</dbReference>
<accession>Q1BZG6</accession>
<protein>
    <recommendedName>
        <fullName evidence="1">Phospho-N-acetylmuramoyl-pentapeptide-transferase</fullName>
        <ecNumber evidence="1">2.7.8.13</ecNumber>
    </recommendedName>
    <alternativeName>
        <fullName evidence="1">UDP-MurNAc-pentapeptide phosphotransferase</fullName>
    </alternativeName>
</protein>
<sequence length="389" mass="42808">MLLALAQWLQGDASFLRLFTYLTFRAVMATITALGIGLVCGPWVIRKLTQMKVGQAVRKDGPQTHLVKSGTPTMGGVLILIGIAVATLLWGDLTNRFIWIVMLVTFGFGVIGWVDDYRKVVHKDPRGMSSREKYFWQSVIGLFAAVYLAFSVSEANNVRVFDLFMAWVRSGLSMGLPARADLMLPFLKSISYPLGVWGFIVLTYFVIVGASNAVNLTDGLDGLVIMPVVLVGASLGVFAYVMGSAVYSKYLLFPHIPGAGELLIFCSAMGGAGLAFLWYNTHPAQVFMGDVGALALGGALGTVAVIVRQEIVLFIMGGIFVAETLSVMLQVSWFKYTKKRYGEGRRLLKMAPLHHHFELSGWKETQVVVRFWIITLMLCLFGLTTLKLR</sequence>
<comment type="function">
    <text evidence="1">Catalyzes the initial step of the lipid cycle reactions in the biosynthesis of the cell wall peptidoglycan: transfers peptidoglycan precursor phospho-MurNAc-pentapeptide from UDP-MurNAc-pentapeptide onto the lipid carrier undecaprenyl phosphate, yielding undecaprenyl-pyrophosphoryl-MurNAc-pentapeptide, known as lipid I.</text>
</comment>
<comment type="catalytic activity">
    <reaction evidence="1">
        <text>UDP-N-acetyl-alpha-D-muramoyl-L-alanyl-gamma-D-glutamyl-meso-2,6-diaminopimeloyl-D-alanyl-D-alanine + di-trans,octa-cis-undecaprenyl phosphate = di-trans,octa-cis-undecaprenyl diphospho-N-acetyl-alpha-D-muramoyl-L-alanyl-D-glutamyl-meso-2,6-diaminopimeloyl-D-alanyl-D-alanine + UMP</text>
        <dbReference type="Rhea" id="RHEA:28386"/>
        <dbReference type="ChEBI" id="CHEBI:57865"/>
        <dbReference type="ChEBI" id="CHEBI:60392"/>
        <dbReference type="ChEBI" id="CHEBI:61386"/>
        <dbReference type="ChEBI" id="CHEBI:61387"/>
        <dbReference type="EC" id="2.7.8.13"/>
    </reaction>
</comment>
<comment type="cofactor">
    <cofactor evidence="1">
        <name>Mg(2+)</name>
        <dbReference type="ChEBI" id="CHEBI:18420"/>
    </cofactor>
</comment>
<comment type="pathway">
    <text evidence="1">Cell wall biogenesis; peptidoglycan biosynthesis.</text>
</comment>
<comment type="subcellular location">
    <subcellularLocation>
        <location evidence="1">Cell inner membrane</location>
        <topology evidence="1">Multi-pass membrane protein</topology>
    </subcellularLocation>
</comment>
<comment type="similarity">
    <text evidence="1">Belongs to the glycosyltransferase 4 family. MraY subfamily.</text>
</comment>
<keyword id="KW-0131">Cell cycle</keyword>
<keyword id="KW-0132">Cell division</keyword>
<keyword id="KW-0997">Cell inner membrane</keyword>
<keyword id="KW-1003">Cell membrane</keyword>
<keyword id="KW-0133">Cell shape</keyword>
<keyword id="KW-0961">Cell wall biogenesis/degradation</keyword>
<keyword id="KW-0460">Magnesium</keyword>
<keyword id="KW-0472">Membrane</keyword>
<keyword id="KW-0479">Metal-binding</keyword>
<keyword id="KW-0573">Peptidoglycan synthesis</keyword>
<keyword id="KW-0808">Transferase</keyword>
<keyword id="KW-0812">Transmembrane</keyword>
<keyword id="KW-1133">Transmembrane helix</keyword>
<evidence type="ECO:0000255" key="1">
    <source>
        <dbReference type="HAMAP-Rule" id="MF_00038"/>
    </source>
</evidence>
<reference key="1">
    <citation type="submission" date="2006-05" db="EMBL/GenBank/DDBJ databases">
        <title>Complete sequence of chromosome 1 of Burkholderia cenocepacia AU 1054.</title>
        <authorList>
            <consortium name="US DOE Joint Genome Institute"/>
            <person name="Copeland A."/>
            <person name="Lucas S."/>
            <person name="Lapidus A."/>
            <person name="Barry K."/>
            <person name="Detter J.C."/>
            <person name="Glavina del Rio T."/>
            <person name="Hammon N."/>
            <person name="Israni S."/>
            <person name="Dalin E."/>
            <person name="Tice H."/>
            <person name="Pitluck S."/>
            <person name="Chain P."/>
            <person name="Malfatti S."/>
            <person name="Shin M."/>
            <person name="Vergez L."/>
            <person name="Schmutz J."/>
            <person name="Larimer F."/>
            <person name="Land M."/>
            <person name="Hauser L."/>
            <person name="Kyrpides N."/>
            <person name="Lykidis A."/>
            <person name="LiPuma J.J."/>
            <person name="Konstantinidis K."/>
            <person name="Tiedje J.M."/>
            <person name="Richardson P."/>
        </authorList>
    </citation>
    <scope>NUCLEOTIDE SEQUENCE [LARGE SCALE GENOMIC DNA]</scope>
    <source>
        <strain>AU 1054</strain>
    </source>
</reference>
<gene>
    <name evidence="1" type="primary">mraY</name>
    <name type="ordered locus">Bcen_0074</name>
</gene>
<feature type="chain" id="PRO_1000002944" description="Phospho-N-acetylmuramoyl-pentapeptide-transferase">
    <location>
        <begin position="1"/>
        <end position="389"/>
    </location>
</feature>
<feature type="transmembrane region" description="Helical" evidence="1">
    <location>
        <begin position="25"/>
        <end position="45"/>
    </location>
</feature>
<feature type="transmembrane region" description="Helical" evidence="1">
    <location>
        <begin position="73"/>
        <end position="93"/>
    </location>
</feature>
<feature type="transmembrane region" description="Helical" evidence="1">
    <location>
        <begin position="97"/>
        <end position="117"/>
    </location>
</feature>
<feature type="transmembrane region" description="Helical" evidence="1">
    <location>
        <begin position="135"/>
        <end position="155"/>
    </location>
</feature>
<feature type="transmembrane region" description="Helical" evidence="1">
    <location>
        <begin position="190"/>
        <end position="210"/>
    </location>
</feature>
<feature type="transmembrane region" description="Helical" evidence="1">
    <location>
        <begin position="222"/>
        <end position="242"/>
    </location>
</feature>
<feature type="transmembrane region" description="Helical" evidence="1">
    <location>
        <begin position="258"/>
        <end position="278"/>
    </location>
</feature>
<feature type="transmembrane region" description="Helical" evidence="1">
    <location>
        <begin position="286"/>
        <end position="306"/>
    </location>
</feature>
<feature type="transmembrane region" description="Helical" evidence="1">
    <location>
        <begin position="311"/>
        <end position="331"/>
    </location>
</feature>
<feature type="transmembrane region" description="Helical" evidence="1">
    <location>
        <begin position="366"/>
        <end position="386"/>
    </location>
</feature>